<reference key="1">
    <citation type="submission" date="2002-03" db="EMBL/GenBank/DDBJ databases">
        <title>21C frontier Korean EST project 2001.</title>
        <authorList>
            <person name="Kim N.S."/>
            <person name="Hahn Y."/>
            <person name="Oh J.H."/>
            <person name="Lee J.Y."/>
            <person name="Ahn H.Y."/>
            <person name="Chu M.Y."/>
            <person name="Kim M.R."/>
            <person name="Oh K.J."/>
            <person name="Cheong J.E."/>
            <person name="Sohn H.Y."/>
            <person name="Kim J.M."/>
            <person name="Park H.S."/>
            <person name="Kim S."/>
            <person name="Kim Y.S."/>
        </authorList>
    </citation>
    <scope>NUCLEOTIDE SEQUENCE [LARGE SCALE MRNA] (ISOFORM 2)</scope>
</reference>
<reference key="2">
    <citation type="journal article" date="2003" name="Nature">
        <title>The DNA sequence and analysis of human chromosome 6.</title>
        <authorList>
            <person name="Mungall A.J."/>
            <person name="Palmer S.A."/>
            <person name="Sims S.K."/>
            <person name="Edwards C.A."/>
            <person name="Ashurst J.L."/>
            <person name="Wilming L."/>
            <person name="Jones M.C."/>
            <person name="Horton R."/>
            <person name="Hunt S.E."/>
            <person name="Scott C.E."/>
            <person name="Gilbert J.G.R."/>
            <person name="Clamp M.E."/>
            <person name="Bethel G."/>
            <person name="Milne S."/>
            <person name="Ainscough R."/>
            <person name="Almeida J.P."/>
            <person name="Ambrose K.D."/>
            <person name="Andrews T.D."/>
            <person name="Ashwell R.I.S."/>
            <person name="Babbage A.K."/>
            <person name="Bagguley C.L."/>
            <person name="Bailey J."/>
            <person name="Banerjee R."/>
            <person name="Barker D.J."/>
            <person name="Barlow K.F."/>
            <person name="Bates K."/>
            <person name="Beare D.M."/>
            <person name="Beasley H."/>
            <person name="Beasley O."/>
            <person name="Bird C.P."/>
            <person name="Blakey S.E."/>
            <person name="Bray-Allen S."/>
            <person name="Brook J."/>
            <person name="Brown A.J."/>
            <person name="Brown J.Y."/>
            <person name="Burford D.C."/>
            <person name="Burrill W."/>
            <person name="Burton J."/>
            <person name="Carder C."/>
            <person name="Carter N.P."/>
            <person name="Chapman J.C."/>
            <person name="Clark S.Y."/>
            <person name="Clark G."/>
            <person name="Clee C.M."/>
            <person name="Clegg S."/>
            <person name="Cobley V."/>
            <person name="Collier R.E."/>
            <person name="Collins J.E."/>
            <person name="Colman L.K."/>
            <person name="Corby N.R."/>
            <person name="Coville G.J."/>
            <person name="Culley K.M."/>
            <person name="Dhami P."/>
            <person name="Davies J."/>
            <person name="Dunn M."/>
            <person name="Earthrowl M.E."/>
            <person name="Ellington A.E."/>
            <person name="Evans K.A."/>
            <person name="Faulkner L."/>
            <person name="Francis M.D."/>
            <person name="Frankish A."/>
            <person name="Frankland J."/>
            <person name="French L."/>
            <person name="Garner P."/>
            <person name="Garnett J."/>
            <person name="Ghori M.J."/>
            <person name="Gilby L.M."/>
            <person name="Gillson C.J."/>
            <person name="Glithero R.J."/>
            <person name="Grafham D.V."/>
            <person name="Grant M."/>
            <person name="Gribble S."/>
            <person name="Griffiths C."/>
            <person name="Griffiths M.N.D."/>
            <person name="Hall R."/>
            <person name="Halls K.S."/>
            <person name="Hammond S."/>
            <person name="Harley J.L."/>
            <person name="Hart E.A."/>
            <person name="Heath P.D."/>
            <person name="Heathcott R."/>
            <person name="Holmes S.J."/>
            <person name="Howden P.J."/>
            <person name="Howe K.L."/>
            <person name="Howell G.R."/>
            <person name="Huckle E."/>
            <person name="Humphray S.J."/>
            <person name="Humphries M.D."/>
            <person name="Hunt A.R."/>
            <person name="Johnson C.M."/>
            <person name="Joy A.A."/>
            <person name="Kay M."/>
            <person name="Keenan S.J."/>
            <person name="Kimberley A.M."/>
            <person name="King A."/>
            <person name="Laird G.K."/>
            <person name="Langford C."/>
            <person name="Lawlor S."/>
            <person name="Leongamornlert D.A."/>
            <person name="Leversha M."/>
            <person name="Lloyd C.R."/>
            <person name="Lloyd D.M."/>
            <person name="Loveland J.E."/>
            <person name="Lovell J."/>
            <person name="Martin S."/>
            <person name="Mashreghi-Mohammadi M."/>
            <person name="Maslen G.L."/>
            <person name="Matthews L."/>
            <person name="McCann O.T."/>
            <person name="McLaren S.J."/>
            <person name="McLay K."/>
            <person name="McMurray A."/>
            <person name="Moore M.J.F."/>
            <person name="Mullikin J.C."/>
            <person name="Niblett D."/>
            <person name="Nickerson T."/>
            <person name="Novik K.L."/>
            <person name="Oliver K."/>
            <person name="Overton-Larty E.K."/>
            <person name="Parker A."/>
            <person name="Patel R."/>
            <person name="Pearce A.V."/>
            <person name="Peck A.I."/>
            <person name="Phillimore B.J.C.T."/>
            <person name="Phillips S."/>
            <person name="Plumb R.W."/>
            <person name="Porter K.M."/>
            <person name="Ramsey Y."/>
            <person name="Ranby S.A."/>
            <person name="Rice C.M."/>
            <person name="Ross M.T."/>
            <person name="Searle S.M."/>
            <person name="Sehra H.K."/>
            <person name="Sheridan E."/>
            <person name="Skuce C.D."/>
            <person name="Smith S."/>
            <person name="Smith M."/>
            <person name="Spraggon L."/>
            <person name="Squares S.L."/>
            <person name="Steward C.A."/>
            <person name="Sycamore N."/>
            <person name="Tamlyn-Hall G."/>
            <person name="Tester J."/>
            <person name="Theaker A.J."/>
            <person name="Thomas D.W."/>
            <person name="Thorpe A."/>
            <person name="Tracey A."/>
            <person name="Tromans A."/>
            <person name="Tubby B."/>
            <person name="Wall M."/>
            <person name="Wallis J.M."/>
            <person name="West A.P."/>
            <person name="White S.S."/>
            <person name="Whitehead S.L."/>
            <person name="Whittaker H."/>
            <person name="Wild A."/>
            <person name="Willey D.J."/>
            <person name="Wilmer T.E."/>
            <person name="Wood J.M."/>
            <person name="Wray P.W."/>
            <person name="Wyatt J.C."/>
            <person name="Young L."/>
            <person name="Younger R.M."/>
            <person name="Bentley D.R."/>
            <person name="Coulson A."/>
            <person name="Durbin R.M."/>
            <person name="Hubbard T."/>
            <person name="Sulston J.E."/>
            <person name="Dunham I."/>
            <person name="Rogers J."/>
            <person name="Beck S."/>
        </authorList>
    </citation>
    <scope>NUCLEOTIDE SEQUENCE [LARGE SCALE GENOMIC DNA]</scope>
</reference>
<reference key="3">
    <citation type="journal article" date="2007" name="BMC Genomics">
        <title>The full-ORF clone resource of the German cDNA consortium.</title>
        <authorList>
            <person name="Bechtel S."/>
            <person name="Rosenfelder H."/>
            <person name="Duda A."/>
            <person name="Schmidt C.P."/>
            <person name="Ernst U."/>
            <person name="Wellenreuther R."/>
            <person name="Mehrle A."/>
            <person name="Schuster C."/>
            <person name="Bahr A."/>
            <person name="Bloecker H."/>
            <person name="Heubner D."/>
            <person name="Hoerlein A."/>
            <person name="Michel G."/>
            <person name="Wedler H."/>
            <person name="Koehrer K."/>
            <person name="Ottenwaelder B."/>
            <person name="Poustka A."/>
            <person name="Wiemann S."/>
            <person name="Schupp I."/>
        </authorList>
    </citation>
    <scope>NUCLEOTIDE SEQUENCE [LARGE SCALE MRNA] OF 57-1188 (ISOFORM 3)</scope>
    <source>
        <tissue>Adrenal tumor</tissue>
        <tissue>Colon tumor</tissue>
    </source>
</reference>
<reference key="4">
    <citation type="journal article" date="2004" name="Genome Res.">
        <title>The status, quality, and expansion of the NIH full-length cDNA project: the Mammalian Gene Collection (MGC).</title>
        <authorList>
            <consortium name="The MGC Project Team"/>
        </authorList>
    </citation>
    <scope>NUCLEOTIDE SEQUENCE [LARGE SCALE MRNA] OF 845-1188 (ISOFORM 1)</scope>
    <source>
        <tissue>Carcinoma</tissue>
    </source>
</reference>
<reference key="5">
    <citation type="journal article" date="2004" name="Nat. Genet.">
        <title>Complete sequencing and characterization of 21,243 full-length human cDNAs.</title>
        <authorList>
            <person name="Ota T."/>
            <person name="Suzuki Y."/>
            <person name="Nishikawa T."/>
            <person name="Otsuki T."/>
            <person name="Sugiyama T."/>
            <person name="Irie R."/>
            <person name="Wakamatsu A."/>
            <person name="Hayashi K."/>
            <person name="Sato H."/>
            <person name="Nagai K."/>
            <person name="Kimura K."/>
            <person name="Makita H."/>
            <person name="Sekine M."/>
            <person name="Obayashi M."/>
            <person name="Nishi T."/>
            <person name="Shibahara T."/>
            <person name="Tanaka T."/>
            <person name="Ishii S."/>
            <person name="Yamamoto J."/>
            <person name="Saito K."/>
            <person name="Kawai Y."/>
            <person name="Isono Y."/>
            <person name="Nakamura Y."/>
            <person name="Nagahari K."/>
            <person name="Murakami K."/>
            <person name="Yasuda T."/>
            <person name="Iwayanagi T."/>
            <person name="Wagatsuma M."/>
            <person name="Shiratori A."/>
            <person name="Sudo H."/>
            <person name="Hosoiri T."/>
            <person name="Kaku Y."/>
            <person name="Kodaira H."/>
            <person name="Kondo H."/>
            <person name="Sugawara M."/>
            <person name="Takahashi M."/>
            <person name="Kanda K."/>
            <person name="Yokoi T."/>
            <person name="Furuya T."/>
            <person name="Kikkawa E."/>
            <person name="Omura Y."/>
            <person name="Abe K."/>
            <person name="Kamihara K."/>
            <person name="Katsuta N."/>
            <person name="Sato K."/>
            <person name="Tanikawa M."/>
            <person name="Yamazaki M."/>
            <person name="Ninomiya K."/>
            <person name="Ishibashi T."/>
            <person name="Yamashita H."/>
            <person name="Murakawa K."/>
            <person name="Fujimori K."/>
            <person name="Tanai H."/>
            <person name="Kimata M."/>
            <person name="Watanabe M."/>
            <person name="Hiraoka S."/>
            <person name="Chiba Y."/>
            <person name="Ishida S."/>
            <person name="Ono Y."/>
            <person name="Takiguchi S."/>
            <person name="Watanabe S."/>
            <person name="Yosida M."/>
            <person name="Hotuta T."/>
            <person name="Kusano J."/>
            <person name="Kanehori K."/>
            <person name="Takahashi-Fujii A."/>
            <person name="Hara H."/>
            <person name="Tanase T.-O."/>
            <person name="Nomura Y."/>
            <person name="Togiya S."/>
            <person name="Komai F."/>
            <person name="Hara R."/>
            <person name="Takeuchi K."/>
            <person name="Arita M."/>
            <person name="Imose N."/>
            <person name="Musashino K."/>
            <person name="Yuuki H."/>
            <person name="Oshima A."/>
            <person name="Sasaki N."/>
            <person name="Aotsuka S."/>
            <person name="Yoshikawa Y."/>
            <person name="Matsunawa H."/>
            <person name="Ichihara T."/>
            <person name="Shiohata N."/>
            <person name="Sano S."/>
            <person name="Moriya S."/>
            <person name="Momiyama H."/>
            <person name="Satoh N."/>
            <person name="Takami S."/>
            <person name="Terashima Y."/>
            <person name="Suzuki O."/>
            <person name="Nakagawa S."/>
            <person name="Senoh A."/>
            <person name="Mizoguchi H."/>
            <person name="Goto Y."/>
            <person name="Shimizu F."/>
            <person name="Wakebe H."/>
            <person name="Hishigaki H."/>
            <person name="Watanabe T."/>
            <person name="Sugiyama A."/>
            <person name="Takemoto M."/>
            <person name="Kawakami B."/>
            <person name="Yamazaki M."/>
            <person name="Watanabe K."/>
            <person name="Kumagai A."/>
            <person name="Itakura S."/>
            <person name="Fukuzumi Y."/>
            <person name="Fujimori Y."/>
            <person name="Komiyama M."/>
            <person name="Tashiro H."/>
            <person name="Tanigami A."/>
            <person name="Fujiwara T."/>
            <person name="Ono T."/>
            <person name="Yamada K."/>
            <person name="Fujii Y."/>
            <person name="Ozaki K."/>
            <person name="Hirao M."/>
            <person name="Ohmori Y."/>
            <person name="Kawabata A."/>
            <person name="Hikiji T."/>
            <person name="Kobatake N."/>
            <person name="Inagaki H."/>
            <person name="Ikema Y."/>
            <person name="Okamoto S."/>
            <person name="Okitani R."/>
            <person name="Kawakami T."/>
            <person name="Noguchi S."/>
            <person name="Itoh T."/>
            <person name="Shigeta K."/>
            <person name="Senba T."/>
            <person name="Matsumura K."/>
            <person name="Nakajima Y."/>
            <person name="Mizuno T."/>
            <person name="Morinaga M."/>
            <person name="Sasaki M."/>
            <person name="Togashi T."/>
            <person name="Oyama M."/>
            <person name="Hata H."/>
            <person name="Watanabe M."/>
            <person name="Komatsu T."/>
            <person name="Mizushima-Sugano J."/>
            <person name="Satoh T."/>
            <person name="Shirai Y."/>
            <person name="Takahashi Y."/>
            <person name="Nakagawa K."/>
            <person name="Okumura K."/>
            <person name="Nagase T."/>
            <person name="Nomura N."/>
            <person name="Kikuchi H."/>
            <person name="Masuho Y."/>
            <person name="Yamashita R."/>
            <person name="Nakai K."/>
            <person name="Yada T."/>
            <person name="Nakamura Y."/>
            <person name="Ohara O."/>
            <person name="Isogai T."/>
            <person name="Sugano S."/>
        </authorList>
    </citation>
    <scope>NUCLEOTIDE SEQUENCE [LARGE SCALE MRNA] OF 1054-1188 (ISOFORM 1)</scope>
    <source>
        <tissue>Embryo</tissue>
    </source>
</reference>
<reference key="6">
    <citation type="journal article" date="2010" name="Sci. Signal.">
        <title>Quantitative phosphoproteomics reveals widespread full phosphorylation site occupancy during mitosis.</title>
        <authorList>
            <person name="Olsen J.V."/>
            <person name="Vermeulen M."/>
            <person name="Santamaria A."/>
            <person name="Kumar C."/>
            <person name="Miller M.L."/>
            <person name="Jensen L.J."/>
            <person name="Gnad F."/>
            <person name="Cox J."/>
            <person name="Jensen T.S."/>
            <person name="Nigg E.A."/>
            <person name="Brunak S."/>
            <person name="Mann M."/>
        </authorList>
    </citation>
    <scope>PHOSPHORYLATION [LARGE SCALE ANALYSIS] AT THR-666</scope>
    <scope>IDENTIFICATION BY MASS SPECTROMETRY [LARGE SCALE ANALYSIS]</scope>
    <source>
        <tissue>Cervix carcinoma</tissue>
    </source>
</reference>
<reference key="7">
    <citation type="journal article" date="2011" name="BMC Syst. Biol.">
        <title>Initial characterization of the human central proteome.</title>
        <authorList>
            <person name="Burkard T.R."/>
            <person name="Planyavsky M."/>
            <person name="Kaupe I."/>
            <person name="Breitwieser F.P."/>
            <person name="Buerckstuemmer T."/>
            <person name="Bennett K.L."/>
            <person name="Superti-Furga G."/>
            <person name="Colinge J."/>
        </authorList>
    </citation>
    <scope>IDENTIFICATION BY MASS SPECTROMETRY [LARGE SCALE ANALYSIS]</scope>
</reference>
<reference key="8">
    <citation type="journal article" date="2011" name="Sci. Signal.">
        <title>System-wide temporal characterization of the proteome and phosphoproteome of human embryonic stem cell differentiation.</title>
        <authorList>
            <person name="Rigbolt K.T."/>
            <person name="Prokhorova T.A."/>
            <person name="Akimov V."/>
            <person name="Henningsen J."/>
            <person name="Johansen P.T."/>
            <person name="Kratchmarova I."/>
            <person name="Kassem M."/>
            <person name="Mann M."/>
            <person name="Olsen J.V."/>
            <person name="Blagoev B."/>
        </authorList>
    </citation>
    <scope>IDENTIFICATION BY MASS SPECTROMETRY [LARGE SCALE ANALYSIS]</scope>
</reference>
<reference key="9">
    <citation type="journal article" date="2014" name="Mol. Cell. Proteomics">
        <title>Immunoaffinity enrichment and mass spectrometry analysis of protein methylation.</title>
        <authorList>
            <person name="Guo A."/>
            <person name="Gu H."/>
            <person name="Zhou J."/>
            <person name="Mulhern D."/>
            <person name="Wang Y."/>
            <person name="Lee K.A."/>
            <person name="Yang V."/>
            <person name="Aguiar M."/>
            <person name="Kornhauser J."/>
            <person name="Jia X."/>
            <person name="Ren J."/>
            <person name="Beausoleil S.A."/>
            <person name="Silva J.C."/>
            <person name="Vemulapalli V."/>
            <person name="Bedford M.T."/>
            <person name="Comb M.J."/>
        </authorList>
    </citation>
    <scope>METHYLATION [LARGE SCALE ANALYSIS] AT ARG-1044; ARG-1073; ARG-1084 AND ARG-1157</scope>
    <scope>IDENTIFICATION BY MASS SPECTROMETRY [LARGE SCALE ANALYSIS]</scope>
    <source>
        <tissue>Colon carcinoma</tissue>
    </source>
</reference>
<evidence type="ECO:0000250" key="1">
    <source>
        <dbReference type="UniProtKB" id="Q91Z58"/>
    </source>
</evidence>
<evidence type="ECO:0000256" key="2">
    <source>
        <dbReference type="SAM" id="MobiDB-lite"/>
    </source>
</evidence>
<evidence type="ECO:0000303" key="3">
    <source>
    </source>
</evidence>
<evidence type="ECO:0000303" key="4">
    <source ref="1"/>
</evidence>
<evidence type="ECO:0000305" key="5"/>
<evidence type="ECO:0007744" key="6">
    <source>
    </source>
</evidence>
<evidence type="ECO:0007744" key="7">
    <source>
    </source>
</evidence>
<protein>
    <recommendedName>
        <fullName>Uncharacterized protein C6orf132</fullName>
    </recommendedName>
</protein>
<sequence length="1188" mass="124034">MKKKQTVQGTFSKLFGKKHTTTPSTSLYATNPPWIFTQEAPEEGTGGFDGIYYGDNRFNTVSESGTATLKARPRVRPLLTFLPLNAQENHGLAVPTPSVPDDFADKEVTGTSSLVNGNLRLYSSVGDLRPGQYGQDLLIPPPPPGPAPGPPQDISEPPGGSPLPSPPSTAPPPPPLLLEPPPPPSMAPPPPPVLEALSPPHTLSSPSIPTPPDFIPPAPPLAFLAPPPPPVPAPAPPAPASPHTVGTRLFPPGGVTKWKSDVALNGRQAEATRASPPRSPAEPKGSALGPNPEPHLTFPRSFKVPPPTPVRTSSIPVQEAQEAPRKEEGATKKAPSRLPLPPSFHIRPASQVYPDRAPEPDCPGELKATAPASPRLGQSQSQADERAGTPPPAPPLPPPAPPLPPPAPPLPPAAPPLPCAQKAAHPPAGFTKTPKSSSPALKPKPNPPSPENTASSAPVDWRDPSQMEKLRNELAAYLCGSRREDRFLSHRPGPTVAPQSKEGKKGPRLPEKETLLSLPAKDTPPGVPEKSLGGSSLTETEAAPSLTLPSVDYIPQDSPTPSVRQIRNELEARLSSAAEKEAKPSIGSLPPKPRLEGGRICENGADDDKLSKPVAKNLPPQSTTLLPTTSLQPKAMLGPAIPPKATPEPAIPPKATLWPATPPKATLGPATPLKATSGPTTPLKATSGPAIASTATTLPTTTSQLMAEKDSGPAGQPEKPASQEVSTPSQARGEGSPSEATRLPTQGARSSAAFPPKTSPGGGEVPCLYKPHCHQSSLSREVAVVMPTLARGGAAGPGEPVEVKEPPGLPAKPPASAQPTDELLRHPVTGEVVERGSPMALLLAARQRAQKGRSVGAALGRSSLPGSLRDHSHQAEASSDSIFHSQGTPNSFTVVPKLPKEAEKDSPLTTEIPNKWGPRLGRDAEGTELSRRHNWTKPEPQAPVAWERVAPSNLPQGHPLPKSFSSPPSPSNKREEEEEEFNFEVIPPPPEFSNDPEPPAPALQYLGRQSSPPRNNYSDLRQLPNAGPGAPPALGFSRFPAGARYAGAGGLERFSGGGRSLIKKRLYVGEPHRGPGLPHGGTGRSLSSPNCFGPQPGGPEMRRVNSAGRAPPGGLHAPRLSLEGAARGAAEAKHKAPGSADYGFAPAAGRSPYTTTRYGSPINTFTVRPGTRHPISYVCSGAHRKATS</sequence>
<name>CF132_HUMAN</name>
<organism>
    <name type="scientific">Homo sapiens</name>
    <name type="common">Human</name>
    <dbReference type="NCBI Taxonomy" id="9606"/>
    <lineage>
        <taxon>Eukaryota</taxon>
        <taxon>Metazoa</taxon>
        <taxon>Chordata</taxon>
        <taxon>Craniata</taxon>
        <taxon>Vertebrata</taxon>
        <taxon>Euteleostomi</taxon>
        <taxon>Mammalia</taxon>
        <taxon>Eutheria</taxon>
        <taxon>Euarchontoglires</taxon>
        <taxon>Primates</taxon>
        <taxon>Haplorrhini</taxon>
        <taxon>Catarrhini</taxon>
        <taxon>Hominidae</taxon>
        <taxon>Homo</taxon>
    </lineage>
</organism>
<gene>
    <name type="primary">C6orf132</name>
</gene>
<dbReference type="EMBL" id="BM742390">
    <property type="status" value="NOT_ANNOTATED_CDS"/>
    <property type="molecule type" value="mRNA"/>
</dbReference>
<dbReference type="EMBL" id="AL096814">
    <property type="status" value="NOT_ANNOTATED_CDS"/>
    <property type="molecule type" value="Genomic_DNA"/>
</dbReference>
<dbReference type="EMBL" id="AL512274">
    <property type="status" value="NOT_ANNOTATED_CDS"/>
    <property type="molecule type" value="Genomic_DNA"/>
</dbReference>
<dbReference type="EMBL" id="BX115838">
    <property type="status" value="NOT_ANNOTATED_CDS"/>
    <property type="molecule type" value="mRNA"/>
</dbReference>
<dbReference type="EMBL" id="CR742252">
    <property type="status" value="NOT_ANNOTATED_CDS"/>
    <property type="molecule type" value="mRNA"/>
</dbReference>
<dbReference type="EMBL" id="BE791477">
    <property type="status" value="NOT_ANNOTATED_CDS"/>
    <property type="molecule type" value="mRNA"/>
</dbReference>
<dbReference type="EMBL" id="BU857282">
    <property type="status" value="NOT_ANNOTATED_CDS"/>
    <property type="molecule type" value="mRNA"/>
</dbReference>
<dbReference type="EMBL" id="CD514500">
    <property type="status" value="NOT_ANNOTATED_CDS"/>
    <property type="molecule type" value="mRNA"/>
</dbReference>
<dbReference type="EMBL" id="AK074567">
    <property type="status" value="NOT_ANNOTATED_CDS"/>
    <property type="molecule type" value="mRNA"/>
</dbReference>
<dbReference type="CCDS" id="CCDS47428.1">
    <molecule id="Q5T0Z8-1"/>
</dbReference>
<dbReference type="RefSeq" id="NP_001157918.1">
    <molecule id="Q5T0Z8-1"/>
    <property type="nucleotide sequence ID" value="NM_001164446.3"/>
</dbReference>
<dbReference type="BioGRID" id="571814">
    <property type="interactions" value="28"/>
</dbReference>
<dbReference type="FunCoup" id="Q5T0Z8">
    <property type="interactions" value="36"/>
</dbReference>
<dbReference type="IntAct" id="Q5T0Z8">
    <property type="interactions" value="12"/>
</dbReference>
<dbReference type="MINT" id="Q5T0Z8"/>
<dbReference type="STRING" id="9606.ENSP00000341368"/>
<dbReference type="GlyGen" id="Q5T0Z8">
    <property type="glycosylation" value="5 sites"/>
</dbReference>
<dbReference type="iPTMnet" id="Q5T0Z8"/>
<dbReference type="PhosphoSitePlus" id="Q5T0Z8"/>
<dbReference type="BioMuta" id="C6orf132"/>
<dbReference type="DMDM" id="327478596"/>
<dbReference type="jPOST" id="Q5T0Z8"/>
<dbReference type="MassIVE" id="Q5T0Z8"/>
<dbReference type="PaxDb" id="9606-ENSP00000341368"/>
<dbReference type="PeptideAtlas" id="Q5T0Z8"/>
<dbReference type="ProteomicsDB" id="64215">
    <molecule id="Q5T0Z8-1"/>
</dbReference>
<dbReference type="ProteomicsDB" id="64216">
    <molecule id="Q5T0Z8-2"/>
</dbReference>
<dbReference type="ProteomicsDB" id="64217">
    <molecule id="Q5T0Z8-4"/>
</dbReference>
<dbReference type="Antibodypedia" id="52363">
    <property type="antibodies" value="39 antibodies from 8 providers"/>
</dbReference>
<dbReference type="Ensembl" id="ENST00000341865.9">
    <molecule id="Q5T0Z8-1"/>
    <property type="protein sequence ID" value="ENSP00000341368.4"/>
    <property type="gene ID" value="ENSG00000188112.10"/>
</dbReference>
<dbReference type="Ensembl" id="ENST00000356542.5">
    <molecule id="Q5T0Z8-2"/>
    <property type="protein sequence ID" value="ENSP00000348941.5"/>
    <property type="gene ID" value="ENSG00000188112.10"/>
</dbReference>
<dbReference type="Ensembl" id="ENST00000696229.1">
    <molecule id="Q5T0Z8-2"/>
    <property type="protein sequence ID" value="ENSP00000512495.1"/>
    <property type="gene ID" value="ENSG00000188112.10"/>
</dbReference>
<dbReference type="GeneID" id="647024"/>
<dbReference type="KEGG" id="hsa:647024"/>
<dbReference type="MANE-Select" id="ENST00000341865.9">
    <property type="protein sequence ID" value="ENSP00000341368.4"/>
    <property type="RefSeq nucleotide sequence ID" value="NM_001164446.3"/>
    <property type="RefSeq protein sequence ID" value="NP_001157918.1"/>
</dbReference>
<dbReference type="UCSC" id="uc003orw.3">
    <molecule id="Q5T0Z8-1"/>
    <property type="organism name" value="human"/>
</dbReference>
<dbReference type="AGR" id="HGNC:21288"/>
<dbReference type="CTD" id="647024"/>
<dbReference type="GeneCards" id="C6orf132"/>
<dbReference type="HGNC" id="HGNC:21288">
    <property type="gene designation" value="C6orf132"/>
</dbReference>
<dbReference type="HPA" id="ENSG00000188112">
    <property type="expression patterns" value="Tissue enhanced (esophagus, skin)"/>
</dbReference>
<dbReference type="MIM" id="620839">
    <property type="type" value="gene"/>
</dbReference>
<dbReference type="neXtProt" id="NX_Q5T0Z8"/>
<dbReference type="OpenTargets" id="ENSG00000188112"/>
<dbReference type="VEuPathDB" id="HostDB:ENSG00000188112"/>
<dbReference type="eggNOG" id="ENOG502QQKX">
    <property type="taxonomic scope" value="Eukaryota"/>
</dbReference>
<dbReference type="GeneTree" id="ENSGT00940000163431"/>
<dbReference type="HOGENOM" id="CLU_008259_0_0_1"/>
<dbReference type="InParanoid" id="Q5T0Z8"/>
<dbReference type="OMA" id="GREEVPC"/>
<dbReference type="OrthoDB" id="9945848at2759"/>
<dbReference type="PAN-GO" id="Q5T0Z8">
    <property type="GO annotations" value="0 GO annotations based on evolutionary models"/>
</dbReference>
<dbReference type="PhylomeDB" id="Q5T0Z8"/>
<dbReference type="TreeFam" id="TF338477"/>
<dbReference type="PathwayCommons" id="Q5T0Z8"/>
<dbReference type="SignaLink" id="Q5T0Z8"/>
<dbReference type="BioGRID-ORCS" id="647024">
    <property type="hits" value="30 hits in 1124 CRISPR screens"/>
</dbReference>
<dbReference type="ChiTaRS" id="C6orf132">
    <property type="organism name" value="human"/>
</dbReference>
<dbReference type="GenomeRNAi" id="647024"/>
<dbReference type="Pharos" id="Q5T0Z8">
    <property type="development level" value="Tdark"/>
</dbReference>
<dbReference type="PRO" id="PR:Q5T0Z8"/>
<dbReference type="Proteomes" id="UP000005640">
    <property type="component" value="Chromosome 6"/>
</dbReference>
<dbReference type="RNAct" id="Q5T0Z8">
    <property type="molecule type" value="protein"/>
</dbReference>
<dbReference type="Bgee" id="ENSG00000188112">
    <property type="expression patterns" value="Expressed in lower esophagus mucosa and 131 other cell types or tissues"/>
</dbReference>
<dbReference type="PANTHER" id="PTHR35077">
    <property type="entry name" value="SIMILAR TO AI661453 PROTEIN"/>
    <property type="match status" value="1"/>
</dbReference>
<dbReference type="PANTHER" id="PTHR35077:SF2">
    <property type="entry name" value="SIMILAR TO AI661453 PROTEIN"/>
    <property type="match status" value="1"/>
</dbReference>
<dbReference type="PRINTS" id="PR01217">
    <property type="entry name" value="PRICHEXTENSN"/>
</dbReference>
<feature type="chain" id="PRO_0000320612" description="Uncharacterized protein C6orf132">
    <location>
        <begin position="1"/>
        <end position="1188"/>
    </location>
</feature>
<feature type="region of interest" description="Disordered" evidence="2">
    <location>
        <begin position="126"/>
        <end position="468"/>
    </location>
</feature>
<feature type="region of interest" description="Disordered" evidence="2">
    <location>
        <begin position="484"/>
        <end position="771"/>
    </location>
</feature>
<feature type="region of interest" description="Disordered" evidence="2">
    <location>
        <begin position="790"/>
        <end position="823"/>
    </location>
</feature>
<feature type="region of interest" description="Disordered" evidence="2">
    <location>
        <begin position="847"/>
        <end position="1039"/>
    </location>
</feature>
<feature type="region of interest" description="Disordered" evidence="2">
    <location>
        <begin position="1069"/>
        <end position="1160"/>
    </location>
</feature>
<feature type="compositionally biased region" description="Pro residues" evidence="2">
    <location>
        <begin position="139"/>
        <end position="151"/>
    </location>
</feature>
<feature type="compositionally biased region" description="Pro residues" evidence="2">
    <location>
        <begin position="159"/>
        <end position="193"/>
    </location>
</feature>
<feature type="compositionally biased region" description="Pro residues" evidence="2">
    <location>
        <begin position="208"/>
        <end position="240"/>
    </location>
</feature>
<feature type="compositionally biased region" description="Basic and acidic residues" evidence="2">
    <location>
        <begin position="322"/>
        <end position="331"/>
    </location>
</feature>
<feature type="compositionally biased region" description="Pro residues" evidence="2">
    <location>
        <begin position="389"/>
        <end position="418"/>
    </location>
</feature>
<feature type="compositionally biased region" description="Low complexity" evidence="2">
    <location>
        <begin position="432"/>
        <end position="441"/>
    </location>
</feature>
<feature type="compositionally biased region" description="Basic and acidic residues" evidence="2">
    <location>
        <begin position="501"/>
        <end position="514"/>
    </location>
</feature>
<feature type="compositionally biased region" description="Basic and acidic residues" evidence="2">
    <location>
        <begin position="566"/>
        <end position="583"/>
    </location>
</feature>
<feature type="compositionally biased region" description="Low complexity" evidence="2">
    <location>
        <begin position="618"/>
        <end position="633"/>
    </location>
</feature>
<feature type="compositionally biased region" description="Pro residues" evidence="2">
    <location>
        <begin position="640"/>
        <end position="652"/>
    </location>
</feature>
<feature type="compositionally biased region" description="Low complexity" evidence="2">
    <location>
        <begin position="689"/>
        <end position="703"/>
    </location>
</feature>
<feature type="compositionally biased region" description="Polar residues" evidence="2">
    <location>
        <begin position="875"/>
        <end position="893"/>
    </location>
</feature>
<feature type="compositionally biased region" description="Basic and acidic residues" evidence="2">
    <location>
        <begin position="920"/>
        <end position="931"/>
    </location>
</feature>
<feature type="compositionally biased region" description="Pro residues" evidence="2">
    <location>
        <begin position="986"/>
        <end position="1001"/>
    </location>
</feature>
<feature type="compositionally biased region" description="Polar residues" evidence="2">
    <location>
        <begin position="1007"/>
        <end position="1019"/>
    </location>
</feature>
<feature type="compositionally biased region" description="Low complexity" evidence="2">
    <location>
        <begin position="1026"/>
        <end position="1035"/>
    </location>
</feature>
<feature type="modified residue" description="Phosphoserine" evidence="1">
    <location>
        <position position="260"/>
    </location>
</feature>
<feature type="modified residue" description="Phosphothreonine" evidence="6">
    <location>
        <position position="666"/>
    </location>
</feature>
<feature type="modified residue" description="Asymmetric dimethylarginine" evidence="7">
    <location>
        <position position="1044"/>
    </location>
</feature>
<feature type="modified residue" description="Omega-N-methylarginine" evidence="7">
    <location>
        <position position="1073"/>
    </location>
</feature>
<feature type="modified residue" description="Omega-N-methylarginine" evidence="7">
    <location>
        <position position="1084"/>
    </location>
</feature>
<feature type="modified residue" description="Asymmetric dimethylarginine" evidence="7">
    <location>
        <position position="1157"/>
    </location>
</feature>
<feature type="splice variant" id="VSP_034432" description="In isoform 2." evidence="4">
    <original>NAQENHGLAVPTPSV</original>
    <variation>TEFHSCCPGWSGTMA</variation>
    <location>
        <begin position="85"/>
        <end position="99"/>
    </location>
</feature>
<feature type="splice variant" id="VSP_034433" description="In isoform 2." evidence="4">
    <location>
        <begin position="100"/>
        <end position="1188"/>
    </location>
</feature>
<feature type="splice variant" id="VSP_040816" description="In isoform 3." evidence="3">
    <original>PSMAPPPPPVLEALSPPHTLSSPSIPTPP</original>
    <variation>EPGVLLALLQQTVSLRIWALVSCGGWEVH</variation>
    <location>
        <begin position="184"/>
        <end position="212"/>
    </location>
</feature>
<feature type="splice variant" id="VSP_040817" description="In isoform 3." evidence="3">
    <location>
        <begin position="213"/>
        <end position="1188"/>
    </location>
</feature>
<feature type="sequence variant" id="VAR_056799" description="In dbSNP:rs9688934.">
    <original>K</original>
    <variation>N</variation>
    <location>
        <position position="4"/>
    </location>
</feature>
<feature type="sequence conflict" description="In Ref. 4; BU857282." evidence="5" ref="4">
    <original>G</original>
    <variation>R</variation>
    <location>
        <position position="856"/>
    </location>
</feature>
<feature type="sequence conflict" description="In Ref. 4; BE791477." evidence="5" ref="4">
    <original>G</original>
    <variation>D</variation>
    <location>
        <position position="887"/>
    </location>
</feature>
<feature type="sequence conflict" description="In Ref. 5; AK074567." evidence="5" ref="5">
    <original>F</original>
    <variation>L</variation>
    <location>
        <position position="1054"/>
    </location>
</feature>
<feature type="sequence conflict" description="In Ref. 4; BE791477." evidence="5" ref="4">
    <original>G</original>
    <variation>R</variation>
    <location>
        <position position="1076"/>
    </location>
</feature>
<feature type="sequence conflict" description="In Ref. 4; BE791477." evidence="5" ref="4">
    <original>TG</original>
    <variation>HR</variation>
    <location>
        <begin position="1082"/>
        <end position="1083"/>
    </location>
</feature>
<feature type="sequence conflict" description="In Ref. 4; BE791477." evidence="5" ref="4">
    <original>N</original>
    <variation>T</variation>
    <location>
        <position position="1090"/>
    </location>
</feature>
<accession>Q5T0Z8</accession>
<accession>A6NI05</accession>
<proteinExistence type="evidence at protein level"/>
<keyword id="KW-0025">Alternative splicing</keyword>
<keyword id="KW-0488">Methylation</keyword>
<keyword id="KW-0597">Phosphoprotein</keyword>
<keyword id="KW-1267">Proteomics identification</keyword>
<keyword id="KW-1185">Reference proteome</keyword>
<comment type="alternative products">
    <event type="alternative splicing"/>
    <isoform>
        <id>Q5T0Z8-1</id>
        <name>1</name>
        <sequence type="displayed"/>
    </isoform>
    <isoform>
        <id>Q5T0Z8-2</id>
        <name>2</name>
        <sequence type="described" ref="VSP_034432 VSP_034433"/>
    </isoform>
    <isoform>
        <id>Q5T0Z8-4</id>
        <name>3</name>
        <sequence type="described" ref="VSP_040816 VSP_040817"/>
    </isoform>
</comment>
<comment type="sequence caution" evidence="5">
    <conflict type="frameshift">
        <sequence resource="EMBL" id="BE791477"/>
    </conflict>
</comment>
<comment type="sequence caution" evidence="5">
    <conflict type="miscellaneous discrepancy">
        <sequence resource="EMBL" id="BU857282"/>
    </conflict>
    <text>Contaminating sequence. Sequence of unknown origin in the N-terminal part.</text>
</comment>
<comment type="sequence caution" evidence="5">
    <conflict type="miscellaneous discrepancy">
        <sequence resource="EMBL" id="BU857282"/>
    </conflict>
    <text>Contaminating sequence. Sequence of unknown origin in the C-terminal part.</text>
</comment>